<gene>
    <name evidence="1" type="primary">lig</name>
    <name type="ordered locus">Mevan_0293</name>
</gene>
<sequence>MLFNEFCKIIEKIENTPKRLEKIDYFVEIIDFVKNHGKPENLKEICQVSIGRVFAEYENREIGIGPNLLIEAIKTTGISENDLNLKIKETGDIGISVEHLSSKIKQISLFNEPLTFEEVYSTIKKLSTIEGTSSQKKKIRIISNLLIIANPIESRYISRLILEDMRIGMNIPTILAAFSNYFGIEKEKIEKVYAVTNDIGLIGKKLLENSNFEEDPELNLTVFRPIKPMLAQLTPSIEEAVIEMKNPQFETKYDGARVQVHKSNGEVKIYSRRLEDITNSVPELVLEIKNLEVDNVILEGECVAMNLENGKPRPFQDILRRFRRKYDIDKMTEEVSLRIYFFDILYHNKGLIDLPLFERRNILENIFGTNNWDLELKKIENEIKSNKMLFTSFKVSSTDLKIAKEFFKWSLSIGHEGIMVKNLNAIYTPGSRVKTMCKIKQTLENLDVVVTRAKIGMGKRKDWYGSYEISVKGDDESLHVIGNVGSGLTEEDLEKLTKIANEIKIEDLGGEVILEPKIVLEVTYEEIQTSEKYEMGYALRFPRVVGIREDKSINDINSLDDVKKIYEIERKRK</sequence>
<keyword id="KW-0067">ATP-binding</keyword>
<keyword id="KW-0131">Cell cycle</keyword>
<keyword id="KW-0132">Cell division</keyword>
<keyword id="KW-0227">DNA damage</keyword>
<keyword id="KW-0233">DNA recombination</keyword>
<keyword id="KW-0234">DNA repair</keyword>
<keyword id="KW-0235">DNA replication</keyword>
<keyword id="KW-0436">Ligase</keyword>
<keyword id="KW-0460">Magnesium</keyword>
<keyword id="KW-0479">Metal-binding</keyword>
<keyword id="KW-0547">Nucleotide-binding</keyword>
<protein>
    <recommendedName>
        <fullName evidence="1">DNA ligase</fullName>
        <ecNumber evidence="1">6.5.1.1</ecNumber>
    </recommendedName>
    <alternativeName>
        <fullName evidence="1">Polydeoxyribonucleotide synthase [ATP]</fullName>
    </alternativeName>
</protein>
<comment type="function">
    <text evidence="1">DNA ligase that seals nicks in double-stranded DNA during DNA replication, DNA recombination and DNA repair.</text>
</comment>
<comment type="catalytic activity">
    <reaction evidence="1">
        <text>ATP + (deoxyribonucleotide)n-3'-hydroxyl + 5'-phospho-(deoxyribonucleotide)m = (deoxyribonucleotide)n+m + AMP + diphosphate.</text>
        <dbReference type="EC" id="6.5.1.1"/>
    </reaction>
</comment>
<comment type="cofactor">
    <cofactor evidence="1">
        <name>Mg(2+)</name>
        <dbReference type="ChEBI" id="CHEBI:18420"/>
    </cofactor>
</comment>
<comment type="similarity">
    <text evidence="1">Belongs to the ATP-dependent DNA ligase family.</text>
</comment>
<dbReference type="EC" id="6.5.1.1" evidence="1"/>
<dbReference type="EMBL" id="CP000742">
    <property type="protein sequence ID" value="ABR54202.1"/>
    <property type="molecule type" value="Genomic_DNA"/>
</dbReference>
<dbReference type="RefSeq" id="WP_011972105.1">
    <property type="nucleotide sequence ID" value="NC_009634.1"/>
</dbReference>
<dbReference type="SMR" id="A6UNY0"/>
<dbReference type="STRING" id="406327.Mevan_0293"/>
<dbReference type="GeneID" id="5325495"/>
<dbReference type="KEGG" id="mvn:Mevan_0293"/>
<dbReference type="eggNOG" id="arCOG01347">
    <property type="taxonomic scope" value="Archaea"/>
</dbReference>
<dbReference type="HOGENOM" id="CLU_005138_6_0_2"/>
<dbReference type="OrthoDB" id="31274at2157"/>
<dbReference type="Proteomes" id="UP000001107">
    <property type="component" value="Chromosome"/>
</dbReference>
<dbReference type="GO" id="GO:0005524">
    <property type="term" value="F:ATP binding"/>
    <property type="evidence" value="ECO:0007669"/>
    <property type="project" value="UniProtKB-UniRule"/>
</dbReference>
<dbReference type="GO" id="GO:0003677">
    <property type="term" value="F:DNA binding"/>
    <property type="evidence" value="ECO:0007669"/>
    <property type="project" value="InterPro"/>
</dbReference>
<dbReference type="GO" id="GO:0003910">
    <property type="term" value="F:DNA ligase (ATP) activity"/>
    <property type="evidence" value="ECO:0007669"/>
    <property type="project" value="UniProtKB-UniRule"/>
</dbReference>
<dbReference type="GO" id="GO:0046872">
    <property type="term" value="F:metal ion binding"/>
    <property type="evidence" value="ECO:0007669"/>
    <property type="project" value="UniProtKB-KW"/>
</dbReference>
<dbReference type="GO" id="GO:0051301">
    <property type="term" value="P:cell division"/>
    <property type="evidence" value="ECO:0007669"/>
    <property type="project" value="UniProtKB-KW"/>
</dbReference>
<dbReference type="GO" id="GO:0071897">
    <property type="term" value="P:DNA biosynthetic process"/>
    <property type="evidence" value="ECO:0007669"/>
    <property type="project" value="InterPro"/>
</dbReference>
<dbReference type="GO" id="GO:0006310">
    <property type="term" value="P:DNA recombination"/>
    <property type="evidence" value="ECO:0007669"/>
    <property type="project" value="UniProtKB-UniRule"/>
</dbReference>
<dbReference type="GO" id="GO:0006281">
    <property type="term" value="P:DNA repair"/>
    <property type="evidence" value="ECO:0007669"/>
    <property type="project" value="UniProtKB-UniRule"/>
</dbReference>
<dbReference type="GO" id="GO:0006273">
    <property type="term" value="P:lagging strand elongation"/>
    <property type="evidence" value="ECO:0007669"/>
    <property type="project" value="TreeGrafter"/>
</dbReference>
<dbReference type="CDD" id="cd07901">
    <property type="entry name" value="Adenylation_DNA_ligase_Arch_LigB"/>
    <property type="match status" value="1"/>
</dbReference>
<dbReference type="FunFam" id="1.10.3260.10:FF:000007">
    <property type="entry name" value="DNA ligase"/>
    <property type="match status" value="1"/>
</dbReference>
<dbReference type="Gene3D" id="1.10.3260.10">
    <property type="entry name" value="DNA ligase, ATP-dependent, N-terminal domain"/>
    <property type="match status" value="1"/>
</dbReference>
<dbReference type="Gene3D" id="3.30.470.30">
    <property type="entry name" value="DNA ligase/mRNA capping enzyme"/>
    <property type="match status" value="1"/>
</dbReference>
<dbReference type="Gene3D" id="2.40.50.140">
    <property type="entry name" value="Nucleic acid-binding proteins"/>
    <property type="match status" value="1"/>
</dbReference>
<dbReference type="HAMAP" id="MF_00407">
    <property type="entry name" value="DNA_ligase"/>
    <property type="match status" value="1"/>
</dbReference>
<dbReference type="InterPro" id="IPR050191">
    <property type="entry name" value="ATP-dep_DNA_ligase"/>
</dbReference>
<dbReference type="InterPro" id="IPR022865">
    <property type="entry name" value="DNA_ligae_ATP-dep_bac/arc"/>
</dbReference>
<dbReference type="InterPro" id="IPR000977">
    <property type="entry name" value="DNA_ligase_ATP-dep"/>
</dbReference>
<dbReference type="InterPro" id="IPR012309">
    <property type="entry name" value="DNA_ligase_ATP-dep_C"/>
</dbReference>
<dbReference type="InterPro" id="IPR012310">
    <property type="entry name" value="DNA_ligase_ATP-dep_cent"/>
</dbReference>
<dbReference type="InterPro" id="IPR016059">
    <property type="entry name" value="DNA_ligase_ATP-dep_CS"/>
</dbReference>
<dbReference type="InterPro" id="IPR012308">
    <property type="entry name" value="DNA_ligase_ATP-dep_N"/>
</dbReference>
<dbReference type="InterPro" id="IPR036599">
    <property type="entry name" value="DNA_ligase_N_sf"/>
</dbReference>
<dbReference type="InterPro" id="IPR012340">
    <property type="entry name" value="NA-bd_OB-fold"/>
</dbReference>
<dbReference type="NCBIfam" id="TIGR00574">
    <property type="entry name" value="dnl1"/>
    <property type="match status" value="1"/>
</dbReference>
<dbReference type="PANTHER" id="PTHR45674:SF7">
    <property type="entry name" value="DNA LIGASE"/>
    <property type="match status" value="1"/>
</dbReference>
<dbReference type="PANTHER" id="PTHR45674">
    <property type="entry name" value="DNA LIGASE 1/3 FAMILY MEMBER"/>
    <property type="match status" value="1"/>
</dbReference>
<dbReference type="Pfam" id="PF04679">
    <property type="entry name" value="DNA_ligase_A_C"/>
    <property type="match status" value="1"/>
</dbReference>
<dbReference type="Pfam" id="PF01068">
    <property type="entry name" value="DNA_ligase_A_M"/>
    <property type="match status" value="1"/>
</dbReference>
<dbReference type="Pfam" id="PF04675">
    <property type="entry name" value="DNA_ligase_A_N"/>
    <property type="match status" value="1"/>
</dbReference>
<dbReference type="SUPFAM" id="SSF117018">
    <property type="entry name" value="ATP-dependent DNA ligase DNA-binding domain"/>
    <property type="match status" value="1"/>
</dbReference>
<dbReference type="SUPFAM" id="SSF56091">
    <property type="entry name" value="DNA ligase/mRNA capping enzyme, catalytic domain"/>
    <property type="match status" value="1"/>
</dbReference>
<dbReference type="SUPFAM" id="SSF50249">
    <property type="entry name" value="Nucleic acid-binding proteins"/>
    <property type="match status" value="1"/>
</dbReference>
<dbReference type="PROSITE" id="PS00697">
    <property type="entry name" value="DNA_LIGASE_A1"/>
    <property type="match status" value="1"/>
</dbReference>
<dbReference type="PROSITE" id="PS00333">
    <property type="entry name" value="DNA_LIGASE_A2"/>
    <property type="match status" value="1"/>
</dbReference>
<dbReference type="PROSITE" id="PS50160">
    <property type="entry name" value="DNA_LIGASE_A3"/>
    <property type="match status" value="1"/>
</dbReference>
<accession>A6UNY0</accession>
<proteinExistence type="inferred from homology"/>
<evidence type="ECO:0000255" key="1">
    <source>
        <dbReference type="HAMAP-Rule" id="MF_00407"/>
    </source>
</evidence>
<organism>
    <name type="scientific">Methanococcus vannielii (strain ATCC 35089 / DSM 1224 / JCM 13029 / OCM 148 / SB)</name>
    <dbReference type="NCBI Taxonomy" id="406327"/>
    <lineage>
        <taxon>Archaea</taxon>
        <taxon>Methanobacteriati</taxon>
        <taxon>Methanobacteriota</taxon>
        <taxon>Methanomada group</taxon>
        <taxon>Methanococci</taxon>
        <taxon>Methanococcales</taxon>
        <taxon>Methanococcaceae</taxon>
        <taxon>Methanococcus</taxon>
    </lineage>
</organism>
<name>DNLI_METVS</name>
<reference key="1">
    <citation type="submission" date="2007-06" db="EMBL/GenBank/DDBJ databases">
        <title>Complete sequence of Methanococcus vannielii SB.</title>
        <authorList>
            <consortium name="US DOE Joint Genome Institute"/>
            <person name="Copeland A."/>
            <person name="Lucas S."/>
            <person name="Lapidus A."/>
            <person name="Barry K."/>
            <person name="Glavina del Rio T."/>
            <person name="Dalin E."/>
            <person name="Tice H."/>
            <person name="Pitluck S."/>
            <person name="Chain P."/>
            <person name="Malfatti S."/>
            <person name="Shin M."/>
            <person name="Vergez L."/>
            <person name="Schmutz J."/>
            <person name="Larimer F."/>
            <person name="Land M."/>
            <person name="Hauser L."/>
            <person name="Kyrpides N."/>
            <person name="Anderson I."/>
            <person name="Sieprawska-Lupa M."/>
            <person name="Whitman W.B."/>
            <person name="Richardson P."/>
        </authorList>
    </citation>
    <scope>NUCLEOTIDE SEQUENCE [LARGE SCALE GENOMIC DNA]</scope>
    <source>
        <strain>ATCC 35089 / DSM 1224 / JCM 13029 / OCM 148 / SB</strain>
    </source>
</reference>
<feature type="chain" id="PRO_0000365253" description="DNA ligase">
    <location>
        <begin position="1"/>
        <end position="573"/>
    </location>
</feature>
<feature type="active site" description="N6-AMP-lysine intermediate" evidence="1">
    <location>
        <position position="252"/>
    </location>
</feature>
<feature type="binding site" evidence="1">
    <location>
        <position position="250"/>
    </location>
    <ligand>
        <name>ATP</name>
        <dbReference type="ChEBI" id="CHEBI:30616"/>
    </ligand>
</feature>
<feature type="binding site" evidence="1">
    <location>
        <position position="257"/>
    </location>
    <ligand>
        <name>ATP</name>
        <dbReference type="ChEBI" id="CHEBI:30616"/>
    </ligand>
</feature>
<feature type="binding site" evidence="1">
    <location>
        <position position="272"/>
    </location>
    <ligand>
        <name>ATP</name>
        <dbReference type="ChEBI" id="CHEBI:30616"/>
    </ligand>
</feature>
<feature type="binding site" evidence="1">
    <location>
        <position position="301"/>
    </location>
    <ligand>
        <name>ATP</name>
        <dbReference type="ChEBI" id="CHEBI:30616"/>
    </ligand>
</feature>
<feature type="binding site" evidence="1">
    <location>
        <position position="342"/>
    </location>
    <ligand>
        <name>ATP</name>
        <dbReference type="ChEBI" id="CHEBI:30616"/>
    </ligand>
</feature>
<feature type="binding site" evidence="1">
    <location>
        <position position="432"/>
    </location>
    <ligand>
        <name>ATP</name>
        <dbReference type="ChEBI" id="CHEBI:30616"/>
    </ligand>
</feature>
<feature type="binding site" evidence="1">
    <location>
        <position position="438"/>
    </location>
    <ligand>
        <name>ATP</name>
        <dbReference type="ChEBI" id="CHEBI:30616"/>
    </ligand>
</feature>